<comment type="function">
    <text>Core component of nucleosome. Nucleosomes wrap and compact DNA into chromatin, limiting DNA accessibility to the cellular machineries which require DNA as a template. Histones thereby play a central role in transcription regulation, DNA repair, DNA replication and chromosomal stability. DNA accessibility is regulated via a complex set of post-translational modifications of histones, also called histone code, and nucleosome remodeling.</text>
</comment>
<comment type="subunit">
    <text>The nucleosome is a histone octamer containing two molecules each of H2A, H2B, H3 and H4 assembled in one H3-H4 heterotetramer and two H2A-H2B heterodimers. The octamer wraps approximately 147 bp of DNA.</text>
</comment>
<comment type="subcellular location">
    <subcellularLocation>
        <location evidence="1">Nucleus</location>
    </subcellularLocation>
    <subcellularLocation>
        <location evidence="1">Chromosome</location>
    </subcellularLocation>
</comment>
<comment type="similarity">
    <text evidence="2">Belongs to the histone H2A family.</text>
</comment>
<dbReference type="EMBL" id="CM000132">
    <property type="protein sequence ID" value="EAZ04237.1"/>
    <property type="molecule type" value="Genomic_DNA"/>
</dbReference>
<dbReference type="PDB" id="8Q15">
    <property type="method" value="EM"/>
    <property type="resolution" value="3.60 A"/>
    <property type="chains" value="A/B=1-135"/>
</dbReference>
<dbReference type="PDB" id="8Q16">
    <property type="method" value="EM"/>
    <property type="resolution" value="3.60 A"/>
    <property type="chains" value="A/B=1-135"/>
</dbReference>
<dbReference type="PDBsum" id="8Q15"/>
<dbReference type="PDBsum" id="8Q16"/>
<dbReference type="EMDB" id="EMD-18060"/>
<dbReference type="EMDB" id="EMD-18061"/>
<dbReference type="SMR" id="A2YMC6"/>
<dbReference type="STRING" id="39946.A2YMC6"/>
<dbReference type="EnsemblPlants" id="BGIOSGA025900-TA">
    <property type="protein sequence ID" value="BGIOSGA025900-PA"/>
    <property type="gene ID" value="BGIOSGA025900"/>
</dbReference>
<dbReference type="EnsemblPlants" id="OsGoSa_07g0018160.01">
    <property type="protein sequence ID" value="OsGoSa_07g0018160.01"/>
    <property type="gene ID" value="OsGoSa_07g0018160"/>
</dbReference>
<dbReference type="EnsemblPlants" id="OsIR64_07g0018870.01">
    <property type="protein sequence ID" value="OsIR64_07g0018870.01"/>
    <property type="gene ID" value="OsIR64_07g0018870"/>
</dbReference>
<dbReference type="EnsemblPlants" id="OsKYG_07g0018300.01">
    <property type="protein sequence ID" value="OsKYG_07g0018300.01"/>
    <property type="gene ID" value="OsKYG_07g0018300"/>
</dbReference>
<dbReference type="EnsemblPlants" id="OsLaMu_07g0018260.01">
    <property type="protein sequence ID" value="OsLaMu_07g0018260.01"/>
    <property type="gene ID" value="OsLaMu_07g0018260"/>
</dbReference>
<dbReference type="EnsemblPlants" id="OsLima_07g0018160.01">
    <property type="protein sequence ID" value="OsLima_07g0018160.01"/>
    <property type="gene ID" value="OsLima_07g0018160"/>
</dbReference>
<dbReference type="EnsemblPlants" id="OsLiXu_07g0018450.01">
    <property type="protein sequence ID" value="OsLiXu_07g0018450.01"/>
    <property type="gene ID" value="OsLiXu_07g0018450"/>
</dbReference>
<dbReference type="EnsemblPlants" id="OsMH63_07G018200_02">
    <property type="protein sequence ID" value="OsMH63_07G018200_02"/>
    <property type="gene ID" value="OsMH63_07G018200"/>
</dbReference>
<dbReference type="EnsemblPlants" id="OsPr106_07g0018370.01">
    <property type="protein sequence ID" value="OsPr106_07g0018370.01"/>
    <property type="gene ID" value="OsPr106_07g0018370"/>
</dbReference>
<dbReference type="EnsemblPlants" id="OsZS97_07G018120_01">
    <property type="protein sequence ID" value="OsZS97_07G018120_01"/>
    <property type="gene ID" value="OsZS97_07G018120"/>
</dbReference>
<dbReference type="Gramene" id="BGIOSGA025900-TA">
    <property type="protein sequence ID" value="BGIOSGA025900-PA"/>
    <property type="gene ID" value="BGIOSGA025900"/>
</dbReference>
<dbReference type="Gramene" id="OsGoSa_07g0018160.01">
    <property type="protein sequence ID" value="OsGoSa_07g0018160.01"/>
    <property type="gene ID" value="OsGoSa_07g0018160"/>
</dbReference>
<dbReference type="Gramene" id="OsIR64_07g0018870.01">
    <property type="protein sequence ID" value="OsIR64_07g0018870.01"/>
    <property type="gene ID" value="OsIR64_07g0018870"/>
</dbReference>
<dbReference type="Gramene" id="OsKYG_07g0018300.01">
    <property type="protein sequence ID" value="OsKYG_07g0018300.01"/>
    <property type="gene ID" value="OsKYG_07g0018300"/>
</dbReference>
<dbReference type="Gramene" id="OsLaMu_07g0018260.01">
    <property type="protein sequence ID" value="OsLaMu_07g0018260.01"/>
    <property type="gene ID" value="OsLaMu_07g0018260"/>
</dbReference>
<dbReference type="Gramene" id="OsLima_07g0018160.01">
    <property type="protein sequence ID" value="OsLima_07g0018160.01"/>
    <property type="gene ID" value="OsLima_07g0018160"/>
</dbReference>
<dbReference type="Gramene" id="OsLiXu_07g0018450.01">
    <property type="protein sequence ID" value="OsLiXu_07g0018450.01"/>
    <property type="gene ID" value="OsLiXu_07g0018450"/>
</dbReference>
<dbReference type="Gramene" id="OsMH63_07G018200_02">
    <property type="protein sequence ID" value="OsMH63_07G018200_02"/>
    <property type="gene ID" value="OsMH63_07G018200"/>
</dbReference>
<dbReference type="Gramene" id="OsPr106_07g0018370.01">
    <property type="protein sequence ID" value="OsPr106_07g0018370.01"/>
    <property type="gene ID" value="OsPr106_07g0018370"/>
</dbReference>
<dbReference type="Gramene" id="OsZS97_07G018120_01">
    <property type="protein sequence ID" value="OsZS97_07G018120_01"/>
    <property type="gene ID" value="OsZS97_07G018120"/>
</dbReference>
<dbReference type="HOGENOM" id="CLU_062828_3_0_1"/>
<dbReference type="OMA" id="HYSKRVG"/>
<dbReference type="OrthoDB" id="685828at2759"/>
<dbReference type="Proteomes" id="UP000007015">
    <property type="component" value="Chromosome 7"/>
</dbReference>
<dbReference type="GO" id="GO:0000786">
    <property type="term" value="C:nucleosome"/>
    <property type="evidence" value="ECO:0007669"/>
    <property type="project" value="UniProtKB-KW"/>
</dbReference>
<dbReference type="GO" id="GO:0005634">
    <property type="term" value="C:nucleus"/>
    <property type="evidence" value="ECO:0007669"/>
    <property type="project" value="UniProtKB-SubCell"/>
</dbReference>
<dbReference type="GO" id="GO:0003677">
    <property type="term" value="F:DNA binding"/>
    <property type="evidence" value="ECO:0007669"/>
    <property type="project" value="UniProtKB-KW"/>
</dbReference>
<dbReference type="GO" id="GO:0046982">
    <property type="term" value="F:protein heterodimerization activity"/>
    <property type="evidence" value="ECO:0007669"/>
    <property type="project" value="InterPro"/>
</dbReference>
<dbReference type="GO" id="GO:0030527">
    <property type="term" value="F:structural constituent of chromatin"/>
    <property type="evidence" value="ECO:0007669"/>
    <property type="project" value="InterPro"/>
</dbReference>
<dbReference type="CDD" id="cd00074">
    <property type="entry name" value="HFD_H2A"/>
    <property type="match status" value="1"/>
</dbReference>
<dbReference type="FunFam" id="1.10.20.10:FF:000009">
    <property type="entry name" value="Histone H2A"/>
    <property type="match status" value="1"/>
</dbReference>
<dbReference type="Gene3D" id="1.10.20.10">
    <property type="entry name" value="Histone, subunit A"/>
    <property type="match status" value="1"/>
</dbReference>
<dbReference type="InterPro" id="IPR009072">
    <property type="entry name" value="Histone-fold"/>
</dbReference>
<dbReference type="InterPro" id="IPR002119">
    <property type="entry name" value="Histone_H2A"/>
</dbReference>
<dbReference type="InterPro" id="IPR007125">
    <property type="entry name" value="Histone_H2A/H2B/H3"/>
</dbReference>
<dbReference type="InterPro" id="IPR032454">
    <property type="entry name" value="Histone_H2A_C"/>
</dbReference>
<dbReference type="InterPro" id="IPR032458">
    <property type="entry name" value="Histone_H2A_CS"/>
</dbReference>
<dbReference type="PANTHER" id="PTHR23430">
    <property type="entry name" value="HISTONE H2A"/>
    <property type="match status" value="1"/>
</dbReference>
<dbReference type="Pfam" id="PF00125">
    <property type="entry name" value="Histone"/>
    <property type="match status" value="1"/>
</dbReference>
<dbReference type="Pfam" id="PF16211">
    <property type="entry name" value="Histone_H2A_C"/>
    <property type="match status" value="1"/>
</dbReference>
<dbReference type="PRINTS" id="PR00620">
    <property type="entry name" value="HISTONEH2A"/>
</dbReference>
<dbReference type="SMART" id="SM00414">
    <property type="entry name" value="H2A"/>
    <property type="match status" value="1"/>
</dbReference>
<dbReference type="SUPFAM" id="SSF47113">
    <property type="entry name" value="Histone-fold"/>
    <property type="match status" value="1"/>
</dbReference>
<dbReference type="PROSITE" id="PS00046">
    <property type="entry name" value="HISTONE_H2A"/>
    <property type="match status" value="1"/>
</dbReference>
<name>H2A2_ORYSI</name>
<proteinExistence type="evidence at protein level"/>
<protein>
    <recommendedName>
        <fullName>Probable histone H2A.2</fullName>
    </recommendedName>
</protein>
<gene>
    <name type="ORF">OsI_025469</name>
</gene>
<keyword id="KW-0002">3D-structure</keyword>
<keyword id="KW-0158">Chromosome</keyword>
<keyword id="KW-0238">DNA-binding</keyword>
<keyword id="KW-0544">Nucleosome core</keyword>
<keyword id="KW-0539">Nucleus</keyword>
<keyword id="KW-1185">Reference proteome</keyword>
<evidence type="ECO:0000250" key="1"/>
<evidence type="ECO:0000305" key="2"/>
<sequence>MAGRGKAIGSGAAKKAMSRSSKAGLQFPVGRIARFLKAGKYAERVGAGAPVYLAAVLEYLAAEVLELAGNAARDNKKTRIVPRHIQLAVRNDEELSRLLGTVTIASGGVMPNIHNLLLPKKAGGSAKAAAGDDDN</sequence>
<organism>
    <name type="scientific">Oryza sativa subsp. indica</name>
    <name type="common">Rice</name>
    <dbReference type="NCBI Taxonomy" id="39946"/>
    <lineage>
        <taxon>Eukaryota</taxon>
        <taxon>Viridiplantae</taxon>
        <taxon>Streptophyta</taxon>
        <taxon>Embryophyta</taxon>
        <taxon>Tracheophyta</taxon>
        <taxon>Spermatophyta</taxon>
        <taxon>Magnoliopsida</taxon>
        <taxon>Liliopsida</taxon>
        <taxon>Poales</taxon>
        <taxon>Poaceae</taxon>
        <taxon>BOP clade</taxon>
        <taxon>Oryzoideae</taxon>
        <taxon>Oryzeae</taxon>
        <taxon>Oryzinae</taxon>
        <taxon>Oryza</taxon>
        <taxon>Oryza sativa</taxon>
    </lineage>
</organism>
<reference key="1">
    <citation type="journal article" date="2005" name="PLoS Biol.">
        <title>The genomes of Oryza sativa: a history of duplications.</title>
        <authorList>
            <person name="Yu J."/>
            <person name="Wang J."/>
            <person name="Lin W."/>
            <person name="Li S."/>
            <person name="Li H."/>
            <person name="Zhou J."/>
            <person name="Ni P."/>
            <person name="Dong W."/>
            <person name="Hu S."/>
            <person name="Zeng C."/>
            <person name="Zhang J."/>
            <person name="Zhang Y."/>
            <person name="Li R."/>
            <person name="Xu Z."/>
            <person name="Li S."/>
            <person name="Li X."/>
            <person name="Zheng H."/>
            <person name="Cong L."/>
            <person name="Lin L."/>
            <person name="Yin J."/>
            <person name="Geng J."/>
            <person name="Li G."/>
            <person name="Shi J."/>
            <person name="Liu J."/>
            <person name="Lv H."/>
            <person name="Li J."/>
            <person name="Wang J."/>
            <person name="Deng Y."/>
            <person name="Ran L."/>
            <person name="Shi X."/>
            <person name="Wang X."/>
            <person name="Wu Q."/>
            <person name="Li C."/>
            <person name="Ren X."/>
            <person name="Wang J."/>
            <person name="Wang X."/>
            <person name="Li D."/>
            <person name="Liu D."/>
            <person name="Zhang X."/>
            <person name="Ji Z."/>
            <person name="Zhao W."/>
            <person name="Sun Y."/>
            <person name="Zhang Z."/>
            <person name="Bao J."/>
            <person name="Han Y."/>
            <person name="Dong L."/>
            <person name="Ji J."/>
            <person name="Chen P."/>
            <person name="Wu S."/>
            <person name="Liu J."/>
            <person name="Xiao Y."/>
            <person name="Bu D."/>
            <person name="Tan J."/>
            <person name="Yang L."/>
            <person name="Ye C."/>
            <person name="Zhang J."/>
            <person name="Xu J."/>
            <person name="Zhou Y."/>
            <person name="Yu Y."/>
            <person name="Zhang B."/>
            <person name="Zhuang S."/>
            <person name="Wei H."/>
            <person name="Liu B."/>
            <person name="Lei M."/>
            <person name="Yu H."/>
            <person name="Li Y."/>
            <person name="Xu H."/>
            <person name="Wei S."/>
            <person name="He X."/>
            <person name="Fang L."/>
            <person name="Zhang Z."/>
            <person name="Zhang Y."/>
            <person name="Huang X."/>
            <person name="Su Z."/>
            <person name="Tong W."/>
            <person name="Li J."/>
            <person name="Tong Z."/>
            <person name="Li S."/>
            <person name="Ye J."/>
            <person name="Wang L."/>
            <person name="Fang L."/>
            <person name="Lei T."/>
            <person name="Chen C.-S."/>
            <person name="Chen H.-C."/>
            <person name="Xu Z."/>
            <person name="Li H."/>
            <person name="Huang H."/>
            <person name="Zhang F."/>
            <person name="Xu H."/>
            <person name="Li N."/>
            <person name="Zhao C."/>
            <person name="Li S."/>
            <person name="Dong L."/>
            <person name="Huang Y."/>
            <person name="Li L."/>
            <person name="Xi Y."/>
            <person name="Qi Q."/>
            <person name="Li W."/>
            <person name="Zhang B."/>
            <person name="Hu W."/>
            <person name="Zhang Y."/>
            <person name="Tian X."/>
            <person name="Jiao Y."/>
            <person name="Liang X."/>
            <person name="Jin J."/>
            <person name="Gao L."/>
            <person name="Zheng W."/>
            <person name="Hao B."/>
            <person name="Liu S.-M."/>
            <person name="Wang W."/>
            <person name="Yuan L."/>
            <person name="Cao M."/>
            <person name="McDermott J."/>
            <person name="Samudrala R."/>
            <person name="Wang J."/>
            <person name="Wong G.K.-S."/>
            <person name="Yang H."/>
        </authorList>
    </citation>
    <scope>NUCLEOTIDE SEQUENCE [LARGE SCALE GENOMIC DNA]</scope>
    <source>
        <strain>cv. 93-11</strain>
    </source>
</reference>
<feature type="chain" id="PRO_0000296120" description="Probable histone H2A.2">
    <location>
        <begin position="1"/>
        <end position="135"/>
    </location>
</feature>
<accession>A2YMC6</accession>